<organism>
    <name type="scientific">Pectobacterium carotovorum subsp. carotovorum (strain PC1)</name>
    <dbReference type="NCBI Taxonomy" id="561230"/>
    <lineage>
        <taxon>Bacteria</taxon>
        <taxon>Pseudomonadati</taxon>
        <taxon>Pseudomonadota</taxon>
        <taxon>Gammaproteobacteria</taxon>
        <taxon>Enterobacterales</taxon>
        <taxon>Pectobacteriaceae</taxon>
        <taxon>Pectobacterium</taxon>
    </lineage>
</organism>
<sequence>MKTPSLTGPVFFTTPKFARLRFAFKLSFAIVLSLFLGFHLQLETPRWSVLTAAIVAAGPAFAAGGEPFSGAIRHRGMLRVVGTFIGCIGALIIIIATVRAPVVMLMLCCIWAGLCTWVSSLVKVENAYVFGLAGYTTLIIIVSTQGTPLLTPQFAVERCSEIVLGIVCAILADLLFSPRSIKQDVDRSMGELLVDQYRLLQLSMSGAEKETIDAAWHALVRKTTALSGMRSSLMLESSRWQNSNRRLTSLHTQSLTMITQACETYLVLQDAPTPVKSSLKLVLDQPVESFRDVHCRVKALRHLIAADSRDVPPTLVSWVGAATRYLLLAKGVQTNGRITTIEADVLNSEVEIKAPSAETHHAMINGLRTGVATALGCLFWLSTGWTSGSVCMVMIAVVTSLAMRLPNPQMMAKDFLFGTIYALPLGALMFMFIMPSTQQSMLLLCLSLGAMAFFLGLEVQKRRLGSLGALASTINILVLDNPMTFHISQFLDSAIGQIIGCFLALMVILLIRDNTKAHTGRTLLNRFVYGAVSALTTNTTRRKENHLPALYQQLFLLLNRFPDDIAKYRLALWLIIMHQRLRTLDIPQNAALSAFHRQIRATAEQVILARRDTTRSRYFTQLLGELERYQQMLTEQQLPASVTAPVGRLTGILRDYQHALSN</sequence>
<protein>
    <recommendedName>
        <fullName evidence="1">p-hydroxybenzoic acid efflux pump subunit AaeB</fullName>
        <shortName evidence="1">pHBA efflux pump protein B</shortName>
    </recommendedName>
</protein>
<keyword id="KW-0997">Cell inner membrane</keyword>
<keyword id="KW-1003">Cell membrane</keyword>
<keyword id="KW-0472">Membrane</keyword>
<keyword id="KW-0812">Transmembrane</keyword>
<keyword id="KW-1133">Transmembrane helix</keyword>
<keyword id="KW-0813">Transport</keyword>
<comment type="function">
    <text evidence="1">Forms an efflux pump with AaeA. Could function as a metabolic relief valve, allowing to eliminate certain compounds when they accumulate to high levels in the cell.</text>
</comment>
<comment type="subcellular location">
    <subcellularLocation>
        <location evidence="1">Cell inner membrane</location>
        <topology evidence="1">Multi-pass membrane protein</topology>
    </subcellularLocation>
</comment>
<comment type="similarity">
    <text evidence="1">Belongs to the aromatic acid exporter ArAE (TC 2.A.85) family.</text>
</comment>
<evidence type="ECO:0000255" key="1">
    <source>
        <dbReference type="HAMAP-Rule" id="MF_01545"/>
    </source>
</evidence>
<dbReference type="EMBL" id="CP001657">
    <property type="protein sequence ID" value="ACT11323.1"/>
    <property type="molecule type" value="Genomic_DNA"/>
</dbReference>
<dbReference type="RefSeq" id="WP_012772987.1">
    <property type="nucleotide sequence ID" value="NC_012917.1"/>
</dbReference>
<dbReference type="SMR" id="C6DIM3"/>
<dbReference type="STRING" id="561230.PC1_0264"/>
<dbReference type="KEGG" id="pct:PC1_0264"/>
<dbReference type="eggNOG" id="COG1289">
    <property type="taxonomic scope" value="Bacteria"/>
</dbReference>
<dbReference type="HOGENOM" id="CLU_027647_0_0_6"/>
<dbReference type="OrthoDB" id="9807111at2"/>
<dbReference type="Proteomes" id="UP000002736">
    <property type="component" value="Chromosome"/>
</dbReference>
<dbReference type="GO" id="GO:0005886">
    <property type="term" value="C:plasma membrane"/>
    <property type="evidence" value="ECO:0007669"/>
    <property type="project" value="UniProtKB-SubCell"/>
</dbReference>
<dbReference type="GO" id="GO:0022857">
    <property type="term" value="F:transmembrane transporter activity"/>
    <property type="evidence" value="ECO:0007669"/>
    <property type="project" value="UniProtKB-UniRule"/>
</dbReference>
<dbReference type="GO" id="GO:0046942">
    <property type="term" value="P:carboxylic acid transport"/>
    <property type="evidence" value="ECO:0007669"/>
    <property type="project" value="InterPro"/>
</dbReference>
<dbReference type="HAMAP" id="MF_01545">
    <property type="entry name" value="AaeB"/>
    <property type="match status" value="1"/>
</dbReference>
<dbReference type="InterPro" id="IPR006726">
    <property type="entry name" value="PHBA_efflux_AaeB/fusaric-R"/>
</dbReference>
<dbReference type="InterPro" id="IPR023706">
    <property type="entry name" value="PHBA_efflux_pump_AaeB"/>
</dbReference>
<dbReference type="NCBIfam" id="NF007916">
    <property type="entry name" value="PRK10631.1"/>
    <property type="match status" value="1"/>
</dbReference>
<dbReference type="PANTHER" id="PTHR30509:SF9">
    <property type="entry name" value="MULTIDRUG RESISTANCE PROTEIN MDTO"/>
    <property type="match status" value="1"/>
</dbReference>
<dbReference type="PANTHER" id="PTHR30509">
    <property type="entry name" value="P-HYDROXYBENZOIC ACID EFFLUX PUMP SUBUNIT-RELATED"/>
    <property type="match status" value="1"/>
</dbReference>
<dbReference type="Pfam" id="PF04632">
    <property type="entry name" value="FUSC"/>
    <property type="match status" value="1"/>
</dbReference>
<reference key="1">
    <citation type="submission" date="2009-07" db="EMBL/GenBank/DDBJ databases">
        <title>Complete sequence of Pectobacterium carotovorum subsp. carotovorum PC1.</title>
        <authorList>
            <consortium name="US DOE Joint Genome Institute"/>
            <person name="Lucas S."/>
            <person name="Copeland A."/>
            <person name="Lapidus A."/>
            <person name="Glavina del Rio T."/>
            <person name="Tice H."/>
            <person name="Bruce D."/>
            <person name="Goodwin L."/>
            <person name="Pitluck S."/>
            <person name="Munk A.C."/>
            <person name="Brettin T."/>
            <person name="Detter J.C."/>
            <person name="Han C."/>
            <person name="Tapia R."/>
            <person name="Larimer F."/>
            <person name="Land M."/>
            <person name="Hauser L."/>
            <person name="Kyrpides N."/>
            <person name="Mikhailova N."/>
            <person name="Balakrishnan V."/>
            <person name="Glasner J."/>
            <person name="Perna N.T."/>
        </authorList>
    </citation>
    <scope>NUCLEOTIDE SEQUENCE [LARGE SCALE GENOMIC DNA]</scope>
    <source>
        <strain>PC1</strain>
    </source>
</reference>
<name>AAEB_PECCP</name>
<feature type="chain" id="PRO_1000215443" description="p-hydroxybenzoic acid efflux pump subunit AaeB">
    <location>
        <begin position="1"/>
        <end position="662"/>
    </location>
</feature>
<feature type="transmembrane region" description="Helical" evidence="1">
    <location>
        <begin position="22"/>
        <end position="42"/>
    </location>
</feature>
<feature type="transmembrane region" description="Helical" evidence="1">
    <location>
        <begin position="52"/>
        <end position="72"/>
    </location>
</feature>
<feature type="transmembrane region" description="Helical" evidence="1">
    <location>
        <begin position="76"/>
        <end position="96"/>
    </location>
</feature>
<feature type="transmembrane region" description="Helical" evidence="1">
    <location>
        <begin position="102"/>
        <end position="122"/>
    </location>
</feature>
<feature type="transmembrane region" description="Helical" evidence="1">
    <location>
        <begin position="129"/>
        <end position="149"/>
    </location>
</feature>
<feature type="transmembrane region" description="Helical" evidence="1">
    <location>
        <begin position="161"/>
        <end position="181"/>
    </location>
</feature>
<feature type="transmembrane region" description="Helical" evidence="1">
    <location>
        <begin position="378"/>
        <end position="398"/>
    </location>
</feature>
<feature type="transmembrane region" description="Helical" evidence="1">
    <location>
        <begin position="415"/>
        <end position="435"/>
    </location>
</feature>
<feature type="transmembrane region" description="Helical" evidence="1">
    <location>
        <begin position="439"/>
        <end position="459"/>
    </location>
</feature>
<feature type="transmembrane region" description="Helical" evidence="1">
    <location>
        <begin position="467"/>
        <end position="487"/>
    </location>
</feature>
<feature type="transmembrane region" description="Helical" evidence="1">
    <location>
        <begin position="491"/>
        <end position="511"/>
    </location>
</feature>
<gene>
    <name evidence="1" type="primary">aaeB</name>
    <name type="ordered locus">PC1_0264</name>
</gene>
<proteinExistence type="inferred from homology"/>
<accession>C6DIM3</accession>